<feature type="chain" id="PRO_1000164449" description="Xanthine phosphoribosyltransferase">
    <location>
        <begin position="1"/>
        <end position="211"/>
    </location>
</feature>
<feature type="binding site" evidence="1">
    <location>
        <position position="31"/>
    </location>
    <ligand>
        <name>xanthine</name>
        <dbReference type="ChEBI" id="CHEBI:17712"/>
    </ligand>
</feature>
<feature type="binding site" evidence="1">
    <location>
        <position position="38"/>
    </location>
    <ligand>
        <name>xanthine</name>
        <dbReference type="ChEBI" id="CHEBI:17712"/>
    </ligand>
</feature>
<feature type="binding site" evidence="1">
    <location>
        <begin position="138"/>
        <end position="142"/>
    </location>
    <ligand>
        <name>5-phospho-alpha-D-ribose 1-diphosphate</name>
        <dbReference type="ChEBI" id="CHEBI:58017"/>
    </ligand>
</feature>
<feature type="binding site" evidence="1">
    <location>
        <position position="166"/>
    </location>
    <ligand>
        <name>xanthine</name>
        <dbReference type="ChEBI" id="CHEBI:17712"/>
    </ligand>
</feature>
<dbReference type="EC" id="2.4.2.22" evidence="1"/>
<dbReference type="EMBL" id="CP001364">
    <property type="protein sequence ID" value="ACM52959.1"/>
    <property type="molecule type" value="Genomic_DNA"/>
</dbReference>
<dbReference type="SMR" id="B9LCT9"/>
<dbReference type="KEGG" id="chl:Chy400_1541"/>
<dbReference type="HOGENOM" id="CLU_099015_0_0_0"/>
<dbReference type="OrthoDB" id="9790678at2"/>
<dbReference type="UniPathway" id="UPA00602">
    <property type="reaction ID" value="UER00658"/>
</dbReference>
<dbReference type="GO" id="GO:0005737">
    <property type="term" value="C:cytoplasm"/>
    <property type="evidence" value="ECO:0007669"/>
    <property type="project" value="UniProtKB-SubCell"/>
</dbReference>
<dbReference type="GO" id="GO:0000310">
    <property type="term" value="F:xanthine phosphoribosyltransferase activity"/>
    <property type="evidence" value="ECO:0007669"/>
    <property type="project" value="UniProtKB-UniRule"/>
</dbReference>
<dbReference type="GO" id="GO:0006166">
    <property type="term" value="P:purine ribonucleoside salvage"/>
    <property type="evidence" value="ECO:0007669"/>
    <property type="project" value="UniProtKB-KW"/>
</dbReference>
<dbReference type="GO" id="GO:0046110">
    <property type="term" value="P:xanthine metabolic process"/>
    <property type="evidence" value="ECO:0007669"/>
    <property type="project" value="InterPro"/>
</dbReference>
<dbReference type="GO" id="GO:0032265">
    <property type="term" value="P:XMP salvage"/>
    <property type="evidence" value="ECO:0007669"/>
    <property type="project" value="UniProtKB-UniRule"/>
</dbReference>
<dbReference type="CDD" id="cd06223">
    <property type="entry name" value="PRTases_typeI"/>
    <property type="match status" value="1"/>
</dbReference>
<dbReference type="Gene3D" id="3.40.50.2020">
    <property type="match status" value="1"/>
</dbReference>
<dbReference type="HAMAP" id="MF_01184">
    <property type="entry name" value="XPRTase"/>
    <property type="match status" value="1"/>
</dbReference>
<dbReference type="InterPro" id="IPR000836">
    <property type="entry name" value="PRibTrfase_dom"/>
</dbReference>
<dbReference type="InterPro" id="IPR029057">
    <property type="entry name" value="PRTase-like"/>
</dbReference>
<dbReference type="InterPro" id="IPR050118">
    <property type="entry name" value="Pur/Pyrimidine_PRTase"/>
</dbReference>
<dbReference type="InterPro" id="IPR010079">
    <property type="entry name" value="Xanthine_PRibTrfase"/>
</dbReference>
<dbReference type="NCBIfam" id="TIGR01744">
    <property type="entry name" value="XPRTase"/>
    <property type="match status" value="1"/>
</dbReference>
<dbReference type="PANTHER" id="PTHR43864">
    <property type="entry name" value="HYPOXANTHINE/GUANINE PHOSPHORIBOSYLTRANSFERASE"/>
    <property type="match status" value="1"/>
</dbReference>
<dbReference type="PANTHER" id="PTHR43864:SF1">
    <property type="entry name" value="XANTHINE PHOSPHORIBOSYLTRANSFERASE"/>
    <property type="match status" value="1"/>
</dbReference>
<dbReference type="Pfam" id="PF00156">
    <property type="entry name" value="Pribosyltran"/>
    <property type="match status" value="1"/>
</dbReference>
<dbReference type="SUPFAM" id="SSF53271">
    <property type="entry name" value="PRTase-like"/>
    <property type="match status" value="1"/>
</dbReference>
<organism>
    <name type="scientific">Chloroflexus aurantiacus (strain ATCC 29364 / DSM 637 / Y-400-fl)</name>
    <dbReference type="NCBI Taxonomy" id="480224"/>
    <lineage>
        <taxon>Bacteria</taxon>
        <taxon>Bacillati</taxon>
        <taxon>Chloroflexota</taxon>
        <taxon>Chloroflexia</taxon>
        <taxon>Chloroflexales</taxon>
        <taxon>Chloroflexineae</taxon>
        <taxon>Chloroflexaceae</taxon>
        <taxon>Chloroflexus</taxon>
    </lineage>
</organism>
<reference key="1">
    <citation type="submission" date="2009-01" db="EMBL/GenBank/DDBJ databases">
        <title>Complete sequence of Chloroflexus sp. Y-400-fl.</title>
        <authorList>
            <consortium name="US DOE Joint Genome Institute"/>
            <person name="Lucas S."/>
            <person name="Copeland A."/>
            <person name="Lapidus A."/>
            <person name="Glavina del Rio T."/>
            <person name="Dalin E."/>
            <person name="Tice H."/>
            <person name="Bruce D."/>
            <person name="Goodwin L."/>
            <person name="Pitluck S."/>
            <person name="Sims D."/>
            <person name="Kiss H."/>
            <person name="Brettin T."/>
            <person name="Detter J.C."/>
            <person name="Han C."/>
            <person name="Larimer F."/>
            <person name="Land M."/>
            <person name="Hauser L."/>
            <person name="Kyrpides N."/>
            <person name="Ovchinnikova G."/>
            <person name="Bryant D.A."/>
            <person name="Richardson P."/>
        </authorList>
    </citation>
    <scope>NUCLEOTIDE SEQUENCE [LARGE SCALE GENOMIC DNA]</scope>
    <source>
        <strain>ATCC 29364 / DSM 637 / Y-400-fl</strain>
    </source>
</reference>
<gene>
    <name evidence="1" type="primary">xpt</name>
    <name type="ordered locus">Chy400_1541</name>
</gene>
<protein>
    <recommendedName>
        <fullName evidence="1">Xanthine phosphoribosyltransferase</fullName>
        <shortName evidence="1">XPRTase</shortName>
        <ecNumber evidence="1">2.4.2.22</ecNumber>
    </recommendedName>
</protein>
<keyword id="KW-0963">Cytoplasm</keyword>
<keyword id="KW-0328">Glycosyltransferase</keyword>
<keyword id="KW-0660">Purine salvage</keyword>
<keyword id="KW-0808">Transferase</keyword>
<evidence type="ECO:0000255" key="1">
    <source>
        <dbReference type="HAMAP-Rule" id="MF_01184"/>
    </source>
</evidence>
<name>XPT_CHLSY</name>
<proteinExistence type="inferred from homology"/>
<accession>B9LCT9</accession>
<sequence length="211" mass="22951">MQLVERFLCEPFPPLAQRIIQEGVVVNDRILKIDHFLNHRIDTDLMSAIGVELATRLQPFAAELILTAEASGIPPALATALAARLPLVYAKKYDPDVPVPALTRHIHSPTRDRQVQLAISARFIPAGSRVAIVDDFLANGRTALALADMVYEAGATVVAAAFVVEKQFQEGRLLLQKLGVPIISLAQITRFVDGRPLIYGWPSSVPGQSDG</sequence>
<comment type="function">
    <text evidence="1">Converts the preformed base xanthine, a product of nucleic acid breakdown, to xanthosine 5'-monophosphate (XMP), so it can be reused for RNA or DNA synthesis.</text>
</comment>
<comment type="catalytic activity">
    <reaction evidence="1">
        <text>XMP + diphosphate = xanthine + 5-phospho-alpha-D-ribose 1-diphosphate</text>
        <dbReference type="Rhea" id="RHEA:10800"/>
        <dbReference type="ChEBI" id="CHEBI:17712"/>
        <dbReference type="ChEBI" id="CHEBI:33019"/>
        <dbReference type="ChEBI" id="CHEBI:57464"/>
        <dbReference type="ChEBI" id="CHEBI:58017"/>
        <dbReference type="EC" id="2.4.2.22"/>
    </reaction>
</comment>
<comment type="pathway">
    <text evidence="1">Purine metabolism; XMP biosynthesis via salvage pathway; XMP from xanthine: step 1/1.</text>
</comment>
<comment type="subunit">
    <text evidence="1">Homodimer.</text>
</comment>
<comment type="subcellular location">
    <subcellularLocation>
        <location evidence="1">Cytoplasm</location>
    </subcellularLocation>
</comment>
<comment type="similarity">
    <text evidence="1">Belongs to the purine/pyrimidine phosphoribosyltransferase family. Xpt subfamily.</text>
</comment>